<evidence type="ECO:0000255" key="1">
    <source>
        <dbReference type="HAMAP-Rule" id="MF_01218"/>
    </source>
</evidence>
<sequence length="208" mass="22624">MAVYVVDHPLVRHKIGILRMESTSTSEFRSVSNEVARLLIYEATKGFRTEKHTVQGWAGPVEIEAISGKKVTVVPILRAGLGLMDGVLDMIPGAKISVVGLYRNEETLEPVEYYVKLASDMDQRLAIILDPMLATGGSLIATIELLKRHGCRQICSLNLVCAPEGIAKVEAAHPDVDIYTAAIDDHLNEQGYIIPGLGDAGDRIFGTK</sequence>
<comment type="function">
    <text evidence="1">Catalyzes the conversion of uracil and 5-phospho-alpha-D-ribose 1-diphosphate (PRPP) to UMP and diphosphate.</text>
</comment>
<comment type="catalytic activity">
    <reaction evidence="1">
        <text>UMP + diphosphate = 5-phospho-alpha-D-ribose 1-diphosphate + uracil</text>
        <dbReference type="Rhea" id="RHEA:13017"/>
        <dbReference type="ChEBI" id="CHEBI:17568"/>
        <dbReference type="ChEBI" id="CHEBI:33019"/>
        <dbReference type="ChEBI" id="CHEBI:57865"/>
        <dbReference type="ChEBI" id="CHEBI:58017"/>
        <dbReference type="EC" id="2.4.2.9"/>
    </reaction>
</comment>
<comment type="cofactor">
    <cofactor evidence="1">
        <name>Mg(2+)</name>
        <dbReference type="ChEBI" id="CHEBI:18420"/>
    </cofactor>
    <text evidence="1">Binds 1 Mg(2+) ion per subunit. The magnesium is bound as Mg-PRPP.</text>
</comment>
<comment type="activity regulation">
    <text evidence="1">Allosterically activated by GTP.</text>
</comment>
<comment type="pathway">
    <text evidence="1">Pyrimidine metabolism; UMP biosynthesis via salvage pathway; UMP from uracil: step 1/1.</text>
</comment>
<comment type="similarity">
    <text evidence="1">Belongs to the UPRTase family.</text>
</comment>
<feature type="chain" id="PRO_1000164820" description="Uracil phosphoribosyltransferase">
    <location>
        <begin position="1"/>
        <end position="208"/>
    </location>
</feature>
<feature type="binding site" evidence="1">
    <location>
        <position position="78"/>
    </location>
    <ligand>
        <name>5-phospho-alpha-D-ribose 1-diphosphate</name>
        <dbReference type="ChEBI" id="CHEBI:58017"/>
    </ligand>
</feature>
<feature type="binding site" evidence="1">
    <location>
        <position position="103"/>
    </location>
    <ligand>
        <name>5-phospho-alpha-D-ribose 1-diphosphate</name>
        <dbReference type="ChEBI" id="CHEBI:58017"/>
    </ligand>
</feature>
<feature type="binding site" evidence="1">
    <location>
        <begin position="130"/>
        <end position="138"/>
    </location>
    <ligand>
        <name>5-phospho-alpha-D-ribose 1-diphosphate</name>
        <dbReference type="ChEBI" id="CHEBI:58017"/>
    </ligand>
</feature>
<feature type="binding site" evidence="1">
    <location>
        <position position="193"/>
    </location>
    <ligand>
        <name>uracil</name>
        <dbReference type="ChEBI" id="CHEBI:17568"/>
    </ligand>
</feature>
<feature type="binding site" evidence="1">
    <location>
        <begin position="198"/>
        <end position="200"/>
    </location>
    <ligand>
        <name>uracil</name>
        <dbReference type="ChEBI" id="CHEBI:17568"/>
    </ligand>
</feature>
<feature type="binding site" evidence="1">
    <location>
        <position position="199"/>
    </location>
    <ligand>
        <name>5-phospho-alpha-D-ribose 1-diphosphate</name>
        <dbReference type="ChEBI" id="CHEBI:58017"/>
    </ligand>
</feature>
<organism>
    <name type="scientific">Desulfovibrio desulfuricans (strain ATCC 27774 / DSM 6949 / MB)</name>
    <dbReference type="NCBI Taxonomy" id="525146"/>
    <lineage>
        <taxon>Bacteria</taxon>
        <taxon>Pseudomonadati</taxon>
        <taxon>Thermodesulfobacteriota</taxon>
        <taxon>Desulfovibrionia</taxon>
        <taxon>Desulfovibrionales</taxon>
        <taxon>Desulfovibrionaceae</taxon>
        <taxon>Desulfovibrio</taxon>
    </lineage>
</organism>
<keyword id="KW-0021">Allosteric enzyme</keyword>
<keyword id="KW-0328">Glycosyltransferase</keyword>
<keyword id="KW-0342">GTP-binding</keyword>
<keyword id="KW-0460">Magnesium</keyword>
<keyword id="KW-0547">Nucleotide-binding</keyword>
<keyword id="KW-0808">Transferase</keyword>
<name>UPP_DESDA</name>
<proteinExistence type="inferred from homology"/>
<gene>
    <name evidence="1" type="primary">upp</name>
    <name type="ordered locus">Ddes_0996</name>
</gene>
<protein>
    <recommendedName>
        <fullName evidence="1">Uracil phosphoribosyltransferase</fullName>
        <ecNumber evidence="1">2.4.2.9</ecNumber>
    </recommendedName>
    <alternativeName>
        <fullName evidence="1">UMP pyrophosphorylase</fullName>
    </alternativeName>
    <alternativeName>
        <fullName evidence="1">UPRTase</fullName>
    </alternativeName>
</protein>
<accession>B8IZH6</accession>
<reference key="1">
    <citation type="submission" date="2009-01" db="EMBL/GenBank/DDBJ databases">
        <title>Complete sequence of Desulfovibrio desulfuricans subsp. desulfuricans str. ATCC 27774.</title>
        <authorList>
            <consortium name="US DOE Joint Genome Institute"/>
            <person name="Lucas S."/>
            <person name="Copeland A."/>
            <person name="Lapidus A."/>
            <person name="Glavina del Rio T."/>
            <person name="Tice H."/>
            <person name="Bruce D."/>
            <person name="Goodwin L."/>
            <person name="Pitluck S."/>
            <person name="Sims D."/>
            <person name="Lu M."/>
            <person name="Kiss H."/>
            <person name="Meineke L."/>
            <person name="Brettin T."/>
            <person name="Detter J.C."/>
            <person name="Han C."/>
            <person name="Larimer F."/>
            <person name="Land M."/>
            <person name="Hauser L."/>
            <person name="Kyrpides N."/>
            <person name="Ovchinnikova G."/>
            <person name="Hazen T.C."/>
        </authorList>
    </citation>
    <scope>NUCLEOTIDE SEQUENCE [LARGE SCALE GENOMIC DNA]</scope>
    <source>
        <strain>ATCC 27774 / DSM 6949 / MB</strain>
    </source>
</reference>
<dbReference type="EC" id="2.4.2.9" evidence="1"/>
<dbReference type="EMBL" id="CP001358">
    <property type="protein sequence ID" value="ACL48903.1"/>
    <property type="molecule type" value="Genomic_DNA"/>
</dbReference>
<dbReference type="SMR" id="B8IZH6"/>
<dbReference type="STRING" id="525146.Ddes_0996"/>
<dbReference type="KEGG" id="dds:Ddes_0996"/>
<dbReference type="eggNOG" id="COG0035">
    <property type="taxonomic scope" value="Bacteria"/>
</dbReference>
<dbReference type="HOGENOM" id="CLU_067096_2_2_7"/>
<dbReference type="UniPathway" id="UPA00574">
    <property type="reaction ID" value="UER00636"/>
</dbReference>
<dbReference type="GO" id="GO:0005525">
    <property type="term" value="F:GTP binding"/>
    <property type="evidence" value="ECO:0007669"/>
    <property type="project" value="UniProtKB-KW"/>
</dbReference>
<dbReference type="GO" id="GO:0000287">
    <property type="term" value="F:magnesium ion binding"/>
    <property type="evidence" value="ECO:0007669"/>
    <property type="project" value="UniProtKB-UniRule"/>
</dbReference>
<dbReference type="GO" id="GO:0004845">
    <property type="term" value="F:uracil phosphoribosyltransferase activity"/>
    <property type="evidence" value="ECO:0007669"/>
    <property type="project" value="UniProtKB-UniRule"/>
</dbReference>
<dbReference type="GO" id="GO:0044206">
    <property type="term" value="P:UMP salvage"/>
    <property type="evidence" value="ECO:0007669"/>
    <property type="project" value="UniProtKB-UniRule"/>
</dbReference>
<dbReference type="GO" id="GO:0006223">
    <property type="term" value="P:uracil salvage"/>
    <property type="evidence" value="ECO:0007669"/>
    <property type="project" value="InterPro"/>
</dbReference>
<dbReference type="CDD" id="cd06223">
    <property type="entry name" value="PRTases_typeI"/>
    <property type="match status" value="1"/>
</dbReference>
<dbReference type="FunFam" id="3.40.50.2020:FF:000003">
    <property type="entry name" value="Uracil phosphoribosyltransferase"/>
    <property type="match status" value="1"/>
</dbReference>
<dbReference type="Gene3D" id="3.40.50.2020">
    <property type="match status" value="1"/>
</dbReference>
<dbReference type="HAMAP" id="MF_01218_B">
    <property type="entry name" value="Upp_B"/>
    <property type="match status" value="1"/>
</dbReference>
<dbReference type="InterPro" id="IPR000836">
    <property type="entry name" value="PRibTrfase_dom"/>
</dbReference>
<dbReference type="InterPro" id="IPR029057">
    <property type="entry name" value="PRTase-like"/>
</dbReference>
<dbReference type="InterPro" id="IPR034332">
    <property type="entry name" value="Upp_B"/>
</dbReference>
<dbReference type="InterPro" id="IPR050054">
    <property type="entry name" value="UPRTase/APRTase"/>
</dbReference>
<dbReference type="InterPro" id="IPR005765">
    <property type="entry name" value="Ura_phspho_trans"/>
</dbReference>
<dbReference type="NCBIfam" id="NF001097">
    <property type="entry name" value="PRK00129.1"/>
    <property type="match status" value="1"/>
</dbReference>
<dbReference type="NCBIfam" id="TIGR01091">
    <property type="entry name" value="upp"/>
    <property type="match status" value="1"/>
</dbReference>
<dbReference type="PANTHER" id="PTHR32315">
    <property type="entry name" value="ADENINE PHOSPHORIBOSYLTRANSFERASE"/>
    <property type="match status" value="1"/>
</dbReference>
<dbReference type="PANTHER" id="PTHR32315:SF4">
    <property type="entry name" value="URACIL PHOSPHORIBOSYLTRANSFERASE, CHLOROPLASTIC"/>
    <property type="match status" value="1"/>
</dbReference>
<dbReference type="Pfam" id="PF14681">
    <property type="entry name" value="UPRTase"/>
    <property type="match status" value="1"/>
</dbReference>
<dbReference type="SUPFAM" id="SSF53271">
    <property type="entry name" value="PRTase-like"/>
    <property type="match status" value="1"/>
</dbReference>